<keyword id="KW-0012">Acyltransferase</keyword>
<keyword id="KW-0963">Cytoplasm</keyword>
<keyword id="KW-0808">Transferase</keyword>
<protein>
    <recommendedName>
        <fullName evidence="1">Aspartate/glutamate leucyltransferase</fullName>
        <ecNumber evidence="1">2.3.2.29</ecNumber>
    </recommendedName>
</protein>
<feature type="chain" id="PRO_1000131974" description="Aspartate/glutamate leucyltransferase">
    <location>
        <begin position="1"/>
        <end position="276"/>
    </location>
</feature>
<dbReference type="EC" id="2.3.2.29" evidence="1"/>
<dbReference type="EMBL" id="AM747720">
    <property type="protein sequence ID" value="CAR51910.1"/>
    <property type="molecule type" value="Genomic_DNA"/>
</dbReference>
<dbReference type="RefSeq" id="WP_006484143.1">
    <property type="nucleotide sequence ID" value="NC_011000.1"/>
</dbReference>
<dbReference type="SMR" id="B4E8N5"/>
<dbReference type="KEGG" id="bcj:BCAL1612"/>
<dbReference type="eggNOG" id="COG2935">
    <property type="taxonomic scope" value="Bacteria"/>
</dbReference>
<dbReference type="HOGENOM" id="CLU_077607_0_0_4"/>
<dbReference type="BioCyc" id="BCEN216591:G1G1V-1787-MONOMER"/>
<dbReference type="Proteomes" id="UP000001035">
    <property type="component" value="Chromosome 1"/>
</dbReference>
<dbReference type="GO" id="GO:0005737">
    <property type="term" value="C:cytoplasm"/>
    <property type="evidence" value="ECO:0007669"/>
    <property type="project" value="UniProtKB-SubCell"/>
</dbReference>
<dbReference type="GO" id="GO:0004057">
    <property type="term" value="F:arginyl-tRNA--protein transferase activity"/>
    <property type="evidence" value="ECO:0007669"/>
    <property type="project" value="InterPro"/>
</dbReference>
<dbReference type="GO" id="GO:0008914">
    <property type="term" value="F:leucyl-tRNA--protein transferase activity"/>
    <property type="evidence" value="ECO:0007669"/>
    <property type="project" value="UniProtKB-UniRule"/>
</dbReference>
<dbReference type="GO" id="GO:0071596">
    <property type="term" value="P:ubiquitin-dependent protein catabolic process via the N-end rule pathway"/>
    <property type="evidence" value="ECO:0007669"/>
    <property type="project" value="InterPro"/>
</dbReference>
<dbReference type="HAMAP" id="MF_00689">
    <property type="entry name" value="Bpt"/>
    <property type="match status" value="1"/>
</dbReference>
<dbReference type="InterPro" id="IPR016181">
    <property type="entry name" value="Acyl_CoA_acyltransferase"/>
</dbReference>
<dbReference type="InterPro" id="IPR017138">
    <property type="entry name" value="Asp_Glu_LeuTrfase"/>
</dbReference>
<dbReference type="InterPro" id="IPR030700">
    <property type="entry name" value="N-end_Aminoacyl_Trfase"/>
</dbReference>
<dbReference type="InterPro" id="IPR007472">
    <property type="entry name" value="N-end_Aminoacyl_Trfase_C"/>
</dbReference>
<dbReference type="InterPro" id="IPR007471">
    <property type="entry name" value="N-end_Aminoacyl_Trfase_N"/>
</dbReference>
<dbReference type="NCBIfam" id="NF002341">
    <property type="entry name" value="PRK01305.1-1"/>
    <property type="match status" value="1"/>
</dbReference>
<dbReference type="NCBIfam" id="NF002342">
    <property type="entry name" value="PRK01305.1-3"/>
    <property type="match status" value="1"/>
</dbReference>
<dbReference type="NCBIfam" id="NF002346">
    <property type="entry name" value="PRK01305.2-3"/>
    <property type="match status" value="1"/>
</dbReference>
<dbReference type="PANTHER" id="PTHR21367">
    <property type="entry name" value="ARGININE-TRNA-PROTEIN TRANSFERASE 1"/>
    <property type="match status" value="1"/>
</dbReference>
<dbReference type="PANTHER" id="PTHR21367:SF1">
    <property type="entry name" value="ARGINYL-TRNA--PROTEIN TRANSFERASE 1"/>
    <property type="match status" value="1"/>
</dbReference>
<dbReference type="Pfam" id="PF04377">
    <property type="entry name" value="ATE_C"/>
    <property type="match status" value="1"/>
</dbReference>
<dbReference type="Pfam" id="PF04376">
    <property type="entry name" value="ATE_N"/>
    <property type="match status" value="1"/>
</dbReference>
<dbReference type="PIRSF" id="PIRSF037208">
    <property type="entry name" value="ATE_pro_prd"/>
    <property type="match status" value="1"/>
</dbReference>
<dbReference type="SUPFAM" id="SSF55729">
    <property type="entry name" value="Acyl-CoA N-acyltransferases (Nat)"/>
    <property type="match status" value="1"/>
</dbReference>
<gene>
    <name evidence="1" type="primary">bpt</name>
    <name type="ordered locus">BceJ2315_15760</name>
    <name type="ORF">BCAL1612</name>
</gene>
<evidence type="ECO:0000255" key="1">
    <source>
        <dbReference type="HAMAP-Rule" id="MF_00689"/>
    </source>
</evidence>
<name>BPT_BURCJ</name>
<proteinExistence type="inferred from homology"/>
<reference key="1">
    <citation type="journal article" date="2009" name="J. Bacteriol.">
        <title>The genome of Burkholderia cenocepacia J2315, an epidemic pathogen of cystic fibrosis patients.</title>
        <authorList>
            <person name="Holden M.T."/>
            <person name="Seth-Smith H.M."/>
            <person name="Crossman L.C."/>
            <person name="Sebaihia M."/>
            <person name="Bentley S.D."/>
            <person name="Cerdeno-Tarraga A.M."/>
            <person name="Thomson N.R."/>
            <person name="Bason N."/>
            <person name="Quail M.A."/>
            <person name="Sharp S."/>
            <person name="Cherevach I."/>
            <person name="Churcher C."/>
            <person name="Goodhead I."/>
            <person name="Hauser H."/>
            <person name="Holroyd N."/>
            <person name="Mungall K."/>
            <person name="Scott P."/>
            <person name="Walker D."/>
            <person name="White B."/>
            <person name="Rose H."/>
            <person name="Iversen P."/>
            <person name="Mil-Homens D."/>
            <person name="Rocha E.P."/>
            <person name="Fialho A.M."/>
            <person name="Baldwin A."/>
            <person name="Dowson C."/>
            <person name="Barrell B.G."/>
            <person name="Govan J.R."/>
            <person name="Vandamme P."/>
            <person name="Hart C.A."/>
            <person name="Mahenthiralingam E."/>
            <person name="Parkhill J."/>
        </authorList>
    </citation>
    <scope>NUCLEOTIDE SEQUENCE [LARGE SCALE GENOMIC DNA]</scope>
    <source>
        <strain>ATCC BAA-245 / DSM 16553 / LMG 16656 / NCTC 13227 / J2315 / CF5610</strain>
    </source>
</reference>
<comment type="function">
    <text evidence="1">Functions in the N-end rule pathway of protein degradation where it conjugates Leu from its aminoacyl-tRNA to the N-termini of proteins containing an N-terminal aspartate or glutamate.</text>
</comment>
<comment type="catalytic activity">
    <reaction evidence="1">
        <text>N-terminal L-glutamyl-[protein] + L-leucyl-tRNA(Leu) = N-terminal L-leucyl-L-glutamyl-[protein] + tRNA(Leu) + H(+)</text>
        <dbReference type="Rhea" id="RHEA:50412"/>
        <dbReference type="Rhea" id="RHEA-COMP:9613"/>
        <dbReference type="Rhea" id="RHEA-COMP:9622"/>
        <dbReference type="Rhea" id="RHEA-COMP:12664"/>
        <dbReference type="Rhea" id="RHEA-COMP:12668"/>
        <dbReference type="ChEBI" id="CHEBI:15378"/>
        <dbReference type="ChEBI" id="CHEBI:64721"/>
        <dbReference type="ChEBI" id="CHEBI:78442"/>
        <dbReference type="ChEBI" id="CHEBI:78494"/>
        <dbReference type="ChEBI" id="CHEBI:133041"/>
        <dbReference type="EC" id="2.3.2.29"/>
    </reaction>
</comment>
<comment type="catalytic activity">
    <reaction evidence="1">
        <text>N-terminal L-aspartyl-[protein] + L-leucyl-tRNA(Leu) = N-terminal L-leucyl-L-aspartyl-[protein] + tRNA(Leu) + H(+)</text>
        <dbReference type="Rhea" id="RHEA:50420"/>
        <dbReference type="Rhea" id="RHEA-COMP:9613"/>
        <dbReference type="Rhea" id="RHEA-COMP:9622"/>
        <dbReference type="Rhea" id="RHEA-COMP:12669"/>
        <dbReference type="Rhea" id="RHEA-COMP:12674"/>
        <dbReference type="ChEBI" id="CHEBI:15378"/>
        <dbReference type="ChEBI" id="CHEBI:64720"/>
        <dbReference type="ChEBI" id="CHEBI:78442"/>
        <dbReference type="ChEBI" id="CHEBI:78494"/>
        <dbReference type="ChEBI" id="CHEBI:133042"/>
        <dbReference type="EC" id="2.3.2.29"/>
    </reaction>
</comment>
<comment type="subcellular location">
    <subcellularLocation>
        <location evidence="1">Cytoplasm</location>
    </subcellularLocation>
</comment>
<comment type="similarity">
    <text evidence="1">Belongs to the R-transferase family. Bpt subfamily.</text>
</comment>
<sequence length="276" mass="31250">MTHPTELPLSPLSALQFYATAPYPCSYLDGRIARSQVATPSHLINSDIYTELVKAGFRRSGVFTYRPYCDGCRACVPVRVPVGEFAPTRTQRRMWKRHRALVATVSPLHYDEEHYALYMRYQSARHAGGGMDRDSRDQYEQFLLQSRINSRLVEFRDLDAPGGEPGKLRMVSMIDILGDGLSSVYTFFEPDDRHTSYGTYNILWQIEQAKSLGLPYVYLGYWIRESPKMAYKANFHPLEGLIDGRWKTLDPERVDLPPVDAALARAPLPGGHSGSG</sequence>
<accession>B4E8N5</accession>
<organism>
    <name type="scientific">Burkholderia cenocepacia (strain ATCC BAA-245 / DSM 16553 / LMG 16656 / NCTC 13227 / J2315 / CF5610)</name>
    <name type="common">Burkholderia cepacia (strain J2315)</name>
    <dbReference type="NCBI Taxonomy" id="216591"/>
    <lineage>
        <taxon>Bacteria</taxon>
        <taxon>Pseudomonadati</taxon>
        <taxon>Pseudomonadota</taxon>
        <taxon>Betaproteobacteria</taxon>
        <taxon>Burkholderiales</taxon>
        <taxon>Burkholderiaceae</taxon>
        <taxon>Burkholderia</taxon>
        <taxon>Burkholderia cepacia complex</taxon>
    </lineage>
</organism>